<sequence length="215" mass="23280">MNQTLLEQFGNARERVEKGLQALRDGQGVLVADDENRENEGDLIFSAESLTEAQMAMLIRECSGIVCLCMPDEKIRSLELPMMVEDNSSRYGTAFTVSIEAAQGVTTGVSAKDRVTTVKTAAADGAKPADLSKPGHVFPLRARPGGVLERRGHTEATVDMMRLAGLKNPCGVLCELTNPDGTMARLPQLADFAKKHGMVLLTVEDLAAYRESQEN</sequence>
<feature type="chain" id="PRO_1000118434" description="3,4-dihydroxy-2-butanone 4-phosphate synthase">
    <location>
        <begin position="1"/>
        <end position="215"/>
    </location>
</feature>
<feature type="binding site" evidence="1">
    <location>
        <begin position="37"/>
        <end position="38"/>
    </location>
    <ligand>
        <name>D-ribulose 5-phosphate</name>
        <dbReference type="ChEBI" id="CHEBI:58121"/>
    </ligand>
</feature>
<feature type="binding site" evidence="1">
    <location>
        <position position="38"/>
    </location>
    <ligand>
        <name>Mg(2+)</name>
        <dbReference type="ChEBI" id="CHEBI:18420"/>
        <label>1</label>
    </ligand>
</feature>
<feature type="binding site" evidence="1">
    <location>
        <position position="38"/>
    </location>
    <ligand>
        <name>Mg(2+)</name>
        <dbReference type="ChEBI" id="CHEBI:18420"/>
        <label>2</label>
    </ligand>
</feature>
<feature type="binding site" evidence="1">
    <location>
        <position position="42"/>
    </location>
    <ligand>
        <name>D-ribulose 5-phosphate</name>
        <dbReference type="ChEBI" id="CHEBI:58121"/>
    </ligand>
</feature>
<feature type="binding site" evidence="1">
    <location>
        <begin position="150"/>
        <end position="154"/>
    </location>
    <ligand>
        <name>D-ribulose 5-phosphate</name>
        <dbReference type="ChEBI" id="CHEBI:58121"/>
    </ligand>
</feature>
<feature type="binding site" evidence="1">
    <location>
        <position position="153"/>
    </location>
    <ligand>
        <name>Mg(2+)</name>
        <dbReference type="ChEBI" id="CHEBI:18420"/>
        <label>2</label>
    </ligand>
</feature>
<feature type="binding site" evidence="1">
    <location>
        <position position="175"/>
    </location>
    <ligand>
        <name>D-ribulose 5-phosphate</name>
        <dbReference type="ChEBI" id="CHEBI:58121"/>
    </ligand>
</feature>
<feature type="site" description="Essential for catalytic activity" evidence="1">
    <location>
        <position position="136"/>
    </location>
</feature>
<feature type="site" description="Essential for catalytic activity" evidence="1">
    <location>
        <position position="175"/>
    </location>
</feature>
<gene>
    <name evidence="1" type="primary">ribB</name>
    <name type="ordered locus">Dalk_3412</name>
</gene>
<name>RIBB_DESAL</name>
<organism>
    <name type="scientific">Desulfatibacillum aliphaticivorans</name>
    <dbReference type="NCBI Taxonomy" id="218208"/>
    <lineage>
        <taxon>Bacteria</taxon>
        <taxon>Pseudomonadati</taxon>
        <taxon>Thermodesulfobacteriota</taxon>
        <taxon>Desulfobacteria</taxon>
        <taxon>Desulfobacterales</taxon>
        <taxon>Desulfatibacillaceae</taxon>
        <taxon>Desulfatibacillum</taxon>
    </lineage>
</organism>
<keyword id="KW-0456">Lyase</keyword>
<keyword id="KW-0460">Magnesium</keyword>
<keyword id="KW-0464">Manganese</keyword>
<keyword id="KW-0479">Metal-binding</keyword>
<keyword id="KW-1185">Reference proteome</keyword>
<keyword id="KW-0686">Riboflavin biosynthesis</keyword>
<proteinExistence type="inferred from homology"/>
<comment type="function">
    <text evidence="1">Catalyzes the conversion of D-ribulose 5-phosphate to formate and 3,4-dihydroxy-2-butanone 4-phosphate.</text>
</comment>
<comment type="catalytic activity">
    <reaction evidence="1">
        <text>D-ribulose 5-phosphate = (2S)-2-hydroxy-3-oxobutyl phosphate + formate + H(+)</text>
        <dbReference type="Rhea" id="RHEA:18457"/>
        <dbReference type="ChEBI" id="CHEBI:15378"/>
        <dbReference type="ChEBI" id="CHEBI:15740"/>
        <dbReference type="ChEBI" id="CHEBI:58121"/>
        <dbReference type="ChEBI" id="CHEBI:58830"/>
        <dbReference type="EC" id="4.1.99.12"/>
    </reaction>
</comment>
<comment type="cofactor">
    <cofactor evidence="1">
        <name>Mg(2+)</name>
        <dbReference type="ChEBI" id="CHEBI:18420"/>
    </cofactor>
    <cofactor evidence="1">
        <name>Mn(2+)</name>
        <dbReference type="ChEBI" id="CHEBI:29035"/>
    </cofactor>
    <text evidence="1">Binds 2 divalent metal cations per subunit. Magnesium or manganese.</text>
</comment>
<comment type="pathway">
    <text evidence="1">Cofactor biosynthesis; riboflavin biosynthesis; 2-hydroxy-3-oxobutyl phosphate from D-ribulose 5-phosphate: step 1/1.</text>
</comment>
<comment type="subunit">
    <text evidence="1">Homodimer.</text>
</comment>
<comment type="similarity">
    <text evidence="1">Belongs to the DHBP synthase family.</text>
</comment>
<reference key="1">
    <citation type="journal article" date="2012" name="Environ. Microbiol.">
        <title>The genome sequence of Desulfatibacillum alkenivorans AK-01: a blueprint for anaerobic alkane oxidation.</title>
        <authorList>
            <person name="Callaghan A.V."/>
            <person name="Morris B.E."/>
            <person name="Pereira I.A."/>
            <person name="McInerney M.J."/>
            <person name="Austin R.N."/>
            <person name="Groves J.T."/>
            <person name="Kukor J.J."/>
            <person name="Suflita J.M."/>
            <person name="Young L.Y."/>
            <person name="Zylstra G.J."/>
            <person name="Wawrik B."/>
        </authorList>
    </citation>
    <scope>NUCLEOTIDE SEQUENCE [LARGE SCALE GENOMIC DNA]</scope>
    <source>
        <strain>AK-01</strain>
    </source>
</reference>
<evidence type="ECO:0000255" key="1">
    <source>
        <dbReference type="HAMAP-Rule" id="MF_00180"/>
    </source>
</evidence>
<accession>B8FLF4</accession>
<protein>
    <recommendedName>
        <fullName evidence="1">3,4-dihydroxy-2-butanone 4-phosphate synthase</fullName>
        <shortName evidence="1">DHBP synthase</shortName>
        <ecNumber evidence="1">4.1.99.12</ecNumber>
    </recommendedName>
</protein>
<dbReference type="EC" id="4.1.99.12" evidence="1"/>
<dbReference type="EMBL" id="CP001322">
    <property type="protein sequence ID" value="ACL05100.1"/>
    <property type="molecule type" value="Genomic_DNA"/>
</dbReference>
<dbReference type="RefSeq" id="WP_015948157.1">
    <property type="nucleotide sequence ID" value="NC_011768.1"/>
</dbReference>
<dbReference type="SMR" id="B8FLF4"/>
<dbReference type="KEGG" id="dal:Dalk_3412"/>
<dbReference type="eggNOG" id="COG0108">
    <property type="taxonomic scope" value="Bacteria"/>
</dbReference>
<dbReference type="HOGENOM" id="CLU_020273_3_0_7"/>
<dbReference type="UniPathway" id="UPA00275">
    <property type="reaction ID" value="UER00399"/>
</dbReference>
<dbReference type="Proteomes" id="UP000000739">
    <property type="component" value="Chromosome"/>
</dbReference>
<dbReference type="GO" id="GO:0005829">
    <property type="term" value="C:cytosol"/>
    <property type="evidence" value="ECO:0007669"/>
    <property type="project" value="TreeGrafter"/>
</dbReference>
<dbReference type="GO" id="GO:0008686">
    <property type="term" value="F:3,4-dihydroxy-2-butanone-4-phosphate synthase activity"/>
    <property type="evidence" value="ECO:0007669"/>
    <property type="project" value="UniProtKB-UniRule"/>
</dbReference>
<dbReference type="GO" id="GO:0000287">
    <property type="term" value="F:magnesium ion binding"/>
    <property type="evidence" value="ECO:0007669"/>
    <property type="project" value="UniProtKB-UniRule"/>
</dbReference>
<dbReference type="GO" id="GO:0030145">
    <property type="term" value="F:manganese ion binding"/>
    <property type="evidence" value="ECO:0007669"/>
    <property type="project" value="UniProtKB-UniRule"/>
</dbReference>
<dbReference type="GO" id="GO:0009231">
    <property type="term" value="P:riboflavin biosynthetic process"/>
    <property type="evidence" value="ECO:0007669"/>
    <property type="project" value="UniProtKB-UniRule"/>
</dbReference>
<dbReference type="FunFam" id="3.90.870.10:FF:000002">
    <property type="entry name" value="3,4-dihydroxy-2-butanone 4-phosphate synthase"/>
    <property type="match status" value="1"/>
</dbReference>
<dbReference type="Gene3D" id="3.90.870.10">
    <property type="entry name" value="DHBP synthase"/>
    <property type="match status" value="1"/>
</dbReference>
<dbReference type="HAMAP" id="MF_00180">
    <property type="entry name" value="RibB"/>
    <property type="match status" value="1"/>
</dbReference>
<dbReference type="InterPro" id="IPR017945">
    <property type="entry name" value="DHBP_synth_RibB-like_a/b_dom"/>
</dbReference>
<dbReference type="InterPro" id="IPR000422">
    <property type="entry name" value="DHBP_synthase_RibB"/>
</dbReference>
<dbReference type="NCBIfam" id="TIGR00506">
    <property type="entry name" value="ribB"/>
    <property type="match status" value="1"/>
</dbReference>
<dbReference type="PANTHER" id="PTHR21327:SF38">
    <property type="entry name" value="3,4-DIHYDROXY-2-BUTANONE 4-PHOSPHATE SYNTHASE"/>
    <property type="match status" value="1"/>
</dbReference>
<dbReference type="PANTHER" id="PTHR21327">
    <property type="entry name" value="GTP CYCLOHYDROLASE II-RELATED"/>
    <property type="match status" value="1"/>
</dbReference>
<dbReference type="Pfam" id="PF00926">
    <property type="entry name" value="DHBP_synthase"/>
    <property type="match status" value="1"/>
</dbReference>
<dbReference type="SUPFAM" id="SSF55821">
    <property type="entry name" value="YrdC/RibB"/>
    <property type="match status" value="1"/>
</dbReference>